<feature type="chain" id="PRO_0000222090" description="Uncharacterized protein ORF3">
    <location>
        <begin position="1"/>
        <end position="302"/>
    </location>
</feature>
<feature type="region of interest" description="Disordered" evidence="1">
    <location>
        <begin position="81"/>
        <end position="100"/>
    </location>
</feature>
<feature type="region of interest" description="Disordered" evidence="1">
    <location>
        <begin position="155"/>
        <end position="209"/>
    </location>
</feature>
<feature type="region of interest" description="Disordered" evidence="1">
    <location>
        <begin position="269"/>
        <end position="302"/>
    </location>
</feature>
<feature type="compositionally biased region" description="Low complexity" evidence="1">
    <location>
        <begin position="196"/>
        <end position="209"/>
    </location>
</feature>
<organism>
    <name type="scientific">Ictalurid herpesvirus 1 (strain Auburn)</name>
    <name type="common">IcHV-1</name>
    <name type="synonym">Channel catfish herpesvirus</name>
    <dbReference type="NCBI Taxonomy" id="766178"/>
    <lineage>
        <taxon>Viruses</taxon>
        <taxon>Duplodnaviria</taxon>
        <taxon>Heunggongvirae</taxon>
        <taxon>Peploviricota</taxon>
        <taxon>Herviviricetes</taxon>
        <taxon>Herpesvirales</taxon>
        <taxon>Alloherpesviridae</taxon>
        <taxon>Ictavirus</taxon>
        <taxon>Ictavirus ictaluridallo1</taxon>
        <taxon>Ictalurid herpesvirus 1</taxon>
    </lineage>
</organism>
<name>VG03_ICHVA</name>
<evidence type="ECO:0000256" key="1">
    <source>
        <dbReference type="SAM" id="MobiDB-lite"/>
    </source>
</evidence>
<proteinExistence type="predicted"/>
<organismHost>
    <name type="scientific">Ictaluridae</name>
    <name type="common">bullhead catfishes</name>
    <dbReference type="NCBI Taxonomy" id="7996"/>
</organismHost>
<protein>
    <recommendedName>
        <fullName>Uncharacterized protein ORF3</fullName>
    </recommendedName>
</protein>
<accession>Q00115</accession>
<reference key="1">
    <citation type="journal article" date="1992" name="Virology">
        <title>Channel catfish virus: a new type of herpesvirus.</title>
        <authorList>
            <person name="Davison A.J."/>
        </authorList>
    </citation>
    <scope>NUCLEOTIDE SEQUENCE [LARGE SCALE GENOMIC DNA]</scope>
</reference>
<keyword id="KW-1185">Reference proteome</keyword>
<sequence length="302" mass="32282">MAFSTSDEKRIAELLGMSPATLSVRVFGVDLPHDPIPWDSDDEGDDTMPTGSWSERALGVETVARPHVYIGPVGIGAVDDETSDWDSPASPPVTGAERAAGGLPRQAPLLVRRVSGNEWRVVSESERRIEEIGRELARICEIQWDEDVAGAPVGTVTGNSPWSPVRGSLLPPKSGSPTYWNPPPPSPSDDTTCEIPSLPSSLVSSPVNPAPMYSPVSDAPLNTPSPNMMITPTHPGLARLLDTPPTPLDADLGDWAVDWLYAPQLGDQLRIESGSSPGKRPLDDPDEVPSSKRGPSRRALLN</sequence>
<gene>
    <name type="primary">ORF3</name>
</gene>
<dbReference type="EMBL" id="M75136">
    <property type="protein sequence ID" value="AAA88184.1"/>
    <property type="molecule type" value="Genomic_DNA"/>
</dbReference>
<dbReference type="EMBL" id="M75136">
    <property type="protein sequence ID" value="AAA88106.1"/>
    <property type="molecule type" value="Genomic_DNA"/>
</dbReference>
<dbReference type="PIR" id="D36786">
    <property type="entry name" value="D36786"/>
</dbReference>
<dbReference type="KEGG" id="vg:1488374"/>
<dbReference type="KEGG" id="vg:1488400"/>
<dbReference type="Proteomes" id="UP000007643">
    <property type="component" value="Segment"/>
</dbReference>